<comment type="function">
    <text evidence="1">IF-3 binds to the 30S ribosomal subunit and shifts the equilibrium between 70S ribosomes and their 50S and 30S subunits in favor of the free subunits, thus enhancing the availability of 30S subunits on which protein synthesis initiation begins.</text>
</comment>
<comment type="subunit">
    <text evidence="1">Monomer.</text>
</comment>
<comment type="subcellular location">
    <subcellularLocation>
        <location evidence="1">Cytoplasm</location>
    </subcellularLocation>
</comment>
<comment type="similarity">
    <text evidence="1">Belongs to the IF-3 family.</text>
</comment>
<comment type="sequence caution" evidence="2">
    <conflict type="erroneous initiation">
        <sequence resource="EMBL-CDS" id="BAB76322"/>
    </conflict>
</comment>
<name>IF3_NOSS1</name>
<protein>
    <recommendedName>
        <fullName evidence="1">Translation initiation factor IF-3</fullName>
    </recommendedName>
</protein>
<evidence type="ECO:0000255" key="1">
    <source>
        <dbReference type="HAMAP-Rule" id="MF_00080"/>
    </source>
</evidence>
<evidence type="ECO:0000305" key="2"/>
<sequence>MPVIEKKRTRDLPQINERIRFPKIRVIDTDGSQLGILTPQEALQLAEEKELDLVLLSDKADPPVCRIMDYGKYKFEQEKKAREARKKQHTADVKEVKMRYKIEEHDYNVRVKQAERFLKDGDKVKATVMFRGREIQHSDLAEDLLKRMATDLEPFGEVQQAPKKEGRNMMMLISPKK</sequence>
<accession>Q8YNE3</accession>
<gene>
    <name evidence="1" type="primary">infC</name>
    <name type="ordered locus">all4623</name>
</gene>
<organism>
    <name type="scientific">Nostoc sp. (strain PCC 7120 / SAG 25.82 / UTEX 2576)</name>
    <dbReference type="NCBI Taxonomy" id="103690"/>
    <lineage>
        <taxon>Bacteria</taxon>
        <taxon>Bacillati</taxon>
        <taxon>Cyanobacteriota</taxon>
        <taxon>Cyanophyceae</taxon>
        <taxon>Nostocales</taxon>
        <taxon>Nostocaceae</taxon>
        <taxon>Nostoc</taxon>
    </lineage>
</organism>
<reference key="1">
    <citation type="journal article" date="2001" name="DNA Res.">
        <title>Complete genomic sequence of the filamentous nitrogen-fixing cyanobacterium Anabaena sp. strain PCC 7120.</title>
        <authorList>
            <person name="Kaneko T."/>
            <person name="Nakamura Y."/>
            <person name="Wolk C.P."/>
            <person name="Kuritz T."/>
            <person name="Sasamoto S."/>
            <person name="Watanabe A."/>
            <person name="Iriguchi M."/>
            <person name="Ishikawa A."/>
            <person name="Kawashima K."/>
            <person name="Kimura T."/>
            <person name="Kishida Y."/>
            <person name="Kohara M."/>
            <person name="Matsumoto M."/>
            <person name="Matsuno A."/>
            <person name="Muraki A."/>
            <person name="Nakazaki N."/>
            <person name="Shimpo S."/>
            <person name="Sugimoto M."/>
            <person name="Takazawa M."/>
            <person name="Yamada M."/>
            <person name="Yasuda M."/>
            <person name="Tabata S."/>
        </authorList>
    </citation>
    <scope>NUCLEOTIDE SEQUENCE [LARGE SCALE GENOMIC DNA]</scope>
    <source>
        <strain>PCC 7120 / SAG 25.82 / UTEX 2576</strain>
    </source>
</reference>
<keyword id="KW-0963">Cytoplasm</keyword>
<keyword id="KW-0396">Initiation factor</keyword>
<keyword id="KW-0648">Protein biosynthesis</keyword>
<keyword id="KW-1185">Reference proteome</keyword>
<dbReference type="EMBL" id="BA000019">
    <property type="protein sequence ID" value="BAB76322.1"/>
    <property type="status" value="ALT_INIT"/>
    <property type="molecule type" value="Genomic_DNA"/>
</dbReference>
<dbReference type="PIR" id="AG2383">
    <property type="entry name" value="AG2383"/>
</dbReference>
<dbReference type="RefSeq" id="WP_011318830.1">
    <property type="nucleotide sequence ID" value="NZ_RSCN01000007.1"/>
</dbReference>
<dbReference type="SMR" id="Q8YNE3"/>
<dbReference type="STRING" id="103690.gene:10496673"/>
<dbReference type="GeneID" id="58724717"/>
<dbReference type="KEGG" id="ana:all4623"/>
<dbReference type="eggNOG" id="COG0290">
    <property type="taxonomic scope" value="Bacteria"/>
</dbReference>
<dbReference type="OrthoDB" id="9806014at2"/>
<dbReference type="Proteomes" id="UP000002483">
    <property type="component" value="Chromosome"/>
</dbReference>
<dbReference type="GO" id="GO:0005829">
    <property type="term" value="C:cytosol"/>
    <property type="evidence" value="ECO:0007669"/>
    <property type="project" value="TreeGrafter"/>
</dbReference>
<dbReference type="GO" id="GO:0016020">
    <property type="term" value="C:membrane"/>
    <property type="evidence" value="ECO:0007669"/>
    <property type="project" value="TreeGrafter"/>
</dbReference>
<dbReference type="GO" id="GO:0043022">
    <property type="term" value="F:ribosome binding"/>
    <property type="evidence" value="ECO:0007669"/>
    <property type="project" value="TreeGrafter"/>
</dbReference>
<dbReference type="GO" id="GO:0003743">
    <property type="term" value="F:translation initiation factor activity"/>
    <property type="evidence" value="ECO:0007669"/>
    <property type="project" value="UniProtKB-UniRule"/>
</dbReference>
<dbReference type="GO" id="GO:0032790">
    <property type="term" value="P:ribosome disassembly"/>
    <property type="evidence" value="ECO:0007669"/>
    <property type="project" value="TreeGrafter"/>
</dbReference>
<dbReference type="FunFam" id="3.10.20.80:FF:000001">
    <property type="entry name" value="Translation initiation factor IF-3"/>
    <property type="match status" value="1"/>
</dbReference>
<dbReference type="FunFam" id="3.30.110.10:FF:000001">
    <property type="entry name" value="Translation initiation factor IF-3"/>
    <property type="match status" value="1"/>
</dbReference>
<dbReference type="Gene3D" id="3.30.110.10">
    <property type="entry name" value="Translation initiation factor 3 (IF-3), C-terminal domain"/>
    <property type="match status" value="1"/>
</dbReference>
<dbReference type="Gene3D" id="3.10.20.80">
    <property type="entry name" value="Translation initiation factor 3 (IF-3), N-terminal domain"/>
    <property type="match status" value="1"/>
</dbReference>
<dbReference type="HAMAP" id="MF_00080">
    <property type="entry name" value="IF_3"/>
    <property type="match status" value="1"/>
</dbReference>
<dbReference type="InterPro" id="IPR036788">
    <property type="entry name" value="T_IF-3_C_sf"/>
</dbReference>
<dbReference type="InterPro" id="IPR036787">
    <property type="entry name" value="T_IF-3_N_sf"/>
</dbReference>
<dbReference type="InterPro" id="IPR019813">
    <property type="entry name" value="Translation_initiation_fac3_CS"/>
</dbReference>
<dbReference type="InterPro" id="IPR001288">
    <property type="entry name" value="Translation_initiation_fac_3"/>
</dbReference>
<dbReference type="InterPro" id="IPR019815">
    <property type="entry name" value="Translation_initiation_fac_3_C"/>
</dbReference>
<dbReference type="InterPro" id="IPR019814">
    <property type="entry name" value="Translation_initiation_fac_3_N"/>
</dbReference>
<dbReference type="NCBIfam" id="TIGR00168">
    <property type="entry name" value="infC"/>
    <property type="match status" value="1"/>
</dbReference>
<dbReference type="PANTHER" id="PTHR10938">
    <property type="entry name" value="TRANSLATION INITIATION FACTOR IF-3"/>
    <property type="match status" value="1"/>
</dbReference>
<dbReference type="PANTHER" id="PTHR10938:SF0">
    <property type="entry name" value="TRANSLATION INITIATION FACTOR IF-3, MITOCHONDRIAL"/>
    <property type="match status" value="1"/>
</dbReference>
<dbReference type="Pfam" id="PF00707">
    <property type="entry name" value="IF3_C"/>
    <property type="match status" value="1"/>
</dbReference>
<dbReference type="Pfam" id="PF05198">
    <property type="entry name" value="IF3_N"/>
    <property type="match status" value="1"/>
</dbReference>
<dbReference type="SUPFAM" id="SSF55200">
    <property type="entry name" value="Translation initiation factor IF3, C-terminal domain"/>
    <property type="match status" value="1"/>
</dbReference>
<dbReference type="SUPFAM" id="SSF54364">
    <property type="entry name" value="Translation initiation factor IF3, N-terminal domain"/>
    <property type="match status" value="1"/>
</dbReference>
<dbReference type="PROSITE" id="PS00938">
    <property type="entry name" value="IF3"/>
    <property type="match status" value="1"/>
</dbReference>
<proteinExistence type="inferred from homology"/>
<feature type="chain" id="PRO_0000177471" description="Translation initiation factor IF-3">
    <location>
        <begin position="1"/>
        <end position="177"/>
    </location>
</feature>